<evidence type="ECO:0000269" key="1">
    <source>
    </source>
</evidence>
<evidence type="ECO:0000303" key="2">
    <source>
    </source>
</evidence>
<evidence type="ECO:0000305" key="3"/>
<name>VP01_OPICY</name>
<organism>
    <name type="scientific">Opisthacanthus cayaporum</name>
    <name type="common">South American scorpion</name>
    <dbReference type="NCBI Taxonomy" id="573324"/>
    <lineage>
        <taxon>Eukaryota</taxon>
        <taxon>Metazoa</taxon>
        <taxon>Ecdysozoa</taxon>
        <taxon>Arthropoda</taxon>
        <taxon>Chelicerata</taxon>
        <taxon>Arachnida</taxon>
        <taxon>Scorpiones</taxon>
        <taxon>Iurida</taxon>
        <taxon>Scorpionoidea</taxon>
        <taxon>Hemiscorpiidae</taxon>
        <taxon>Opisthacanthus</taxon>
    </lineage>
</organism>
<reference evidence="3" key="1">
    <citation type="journal article" date="2008" name="Toxicon">
        <title>Mass spectrometry analysis, amino acid sequence and biological activity of venom components from the Brazilian scorpion Opisthacanthus cayaporum.</title>
        <authorList>
            <person name="Schwartz E.F."/>
            <person name="Camargos T.S."/>
            <person name="Zamudio F.Z."/>
            <person name="Silva L.P."/>
            <person name="Bloch C. Jr."/>
            <person name="Caixeta F."/>
            <person name="Schwartz C.A."/>
            <person name="Possani L.D."/>
        </authorList>
    </citation>
    <scope>PROTEIN SEQUENCE</scope>
    <scope>SUBCELLULAR LOCATION</scope>
    <scope>TISSUE SPECIFICITY</scope>
    <scope>MASS SPECTROMETRY</scope>
    <source>
        <tissue evidence="1">Venom</tissue>
    </source>
</reference>
<sequence>FENEDEGYFQDPEDCS</sequence>
<comment type="subcellular location">
    <subcellularLocation>
        <location evidence="1">Secreted</location>
    </subcellularLocation>
</comment>
<comment type="tissue specificity">
    <text evidence="1">Expressed by the venom gland.</text>
</comment>
<comment type="mass spectrometry"/>
<proteinExistence type="evidence at protein level"/>
<feature type="peptide" id="PRO_0000398137" description="Venom peptide OcyTx1" evidence="1">
    <location>
        <begin position="1"/>
        <end position="16" status="greater than"/>
    </location>
</feature>
<feature type="non-terminal residue" evidence="2">
    <location>
        <position position="16"/>
    </location>
</feature>
<accession>P86118</accession>
<protein>
    <recommendedName>
        <fullName evidence="2">Venom peptide OcyTx1</fullName>
    </recommendedName>
</protein>
<keyword id="KW-0903">Direct protein sequencing</keyword>
<keyword id="KW-0964">Secreted</keyword>
<dbReference type="GO" id="GO:0005576">
    <property type="term" value="C:extracellular region"/>
    <property type="evidence" value="ECO:0007669"/>
    <property type="project" value="UniProtKB-SubCell"/>
</dbReference>